<sequence length="267" mass="28079">MSLFHLILVALIQGITEFLPVSSSGHLILLPALTGLEDQGQVIDVAVHVGTLGAVVLYFWRDVRDGLAGLPRALTGRLDTPGARLAMGLIVATIPTVLAGAALHFTGLSDALRSITVIGWTMLLFGLLLWWADRTGAQVKEATDWSLRDALILGLWQAVALIPGTSRSGITITGARAMGYTRSDGARISMLMSIPTIIASGVLLGADVAVTSDAQAARDGAIAAAFAFVSALLALSLMMRLLRSVSFTPYVIYRLALGLVLLGIAYS</sequence>
<accession>Q5LLZ3</accession>
<keyword id="KW-0046">Antibiotic resistance</keyword>
<keyword id="KW-0997">Cell inner membrane</keyword>
<keyword id="KW-1003">Cell membrane</keyword>
<keyword id="KW-0133">Cell shape</keyword>
<keyword id="KW-0961">Cell wall biogenesis/degradation</keyword>
<keyword id="KW-0378">Hydrolase</keyword>
<keyword id="KW-0472">Membrane</keyword>
<keyword id="KW-0573">Peptidoglycan synthesis</keyword>
<keyword id="KW-1185">Reference proteome</keyword>
<keyword id="KW-0812">Transmembrane</keyword>
<keyword id="KW-1133">Transmembrane helix</keyword>
<reference key="1">
    <citation type="journal article" date="2004" name="Nature">
        <title>Genome sequence of Silicibacter pomeroyi reveals adaptations to the marine environment.</title>
        <authorList>
            <person name="Moran M.A."/>
            <person name="Buchan A."/>
            <person name="Gonzalez J.M."/>
            <person name="Heidelberg J.F."/>
            <person name="Whitman W.B."/>
            <person name="Kiene R.P."/>
            <person name="Henriksen J.R."/>
            <person name="King G.M."/>
            <person name="Belas R."/>
            <person name="Fuqua C."/>
            <person name="Brinkac L.M."/>
            <person name="Lewis M."/>
            <person name="Johri S."/>
            <person name="Weaver B."/>
            <person name="Pai G."/>
            <person name="Eisen J.A."/>
            <person name="Rahe E."/>
            <person name="Sheldon W.M."/>
            <person name="Ye W."/>
            <person name="Miller T.R."/>
            <person name="Carlton J."/>
            <person name="Rasko D.A."/>
            <person name="Paulsen I.T."/>
            <person name="Ren Q."/>
            <person name="Daugherty S.C."/>
            <person name="DeBoy R.T."/>
            <person name="Dodson R.J."/>
            <person name="Durkin A.S."/>
            <person name="Madupu R."/>
            <person name="Nelson W.C."/>
            <person name="Sullivan S.A."/>
            <person name="Rosovitz M.J."/>
            <person name="Haft D.H."/>
            <person name="Selengut J."/>
            <person name="Ward N."/>
        </authorList>
    </citation>
    <scope>NUCLEOTIDE SEQUENCE [LARGE SCALE GENOMIC DNA]</scope>
    <source>
        <strain>ATCC 700808 / DSM 15171 / DSS-3</strain>
    </source>
</reference>
<reference key="2">
    <citation type="journal article" date="2014" name="Stand. Genomic Sci.">
        <title>An updated genome annotation for the model marine bacterium Ruegeria pomeroyi DSS-3.</title>
        <authorList>
            <person name="Rivers A.R."/>
            <person name="Smith C.B."/>
            <person name="Moran M.A."/>
        </authorList>
    </citation>
    <scope>GENOME REANNOTATION</scope>
    <source>
        <strain>ATCC 700808 / DSM 15171 / DSS-3</strain>
    </source>
</reference>
<organism>
    <name type="scientific">Ruegeria pomeroyi (strain ATCC 700808 / DSM 15171 / DSS-3)</name>
    <name type="common">Silicibacter pomeroyi</name>
    <dbReference type="NCBI Taxonomy" id="246200"/>
    <lineage>
        <taxon>Bacteria</taxon>
        <taxon>Pseudomonadati</taxon>
        <taxon>Pseudomonadota</taxon>
        <taxon>Alphaproteobacteria</taxon>
        <taxon>Rhodobacterales</taxon>
        <taxon>Roseobacteraceae</taxon>
        <taxon>Ruegeria</taxon>
    </lineage>
</organism>
<dbReference type="EC" id="3.6.1.27" evidence="1"/>
<dbReference type="EMBL" id="CP000031">
    <property type="protein sequence ID" value="AAV96992.1"/>
    <property type="molecule type" value="Genomic_DNA"/>
</dbReference>
<dbReference type="RefSeq" id="WP_011049450.1">
    <property type="nucleotide sequence ID" value="NC_003911.12"/>
</dbReference>
<dbReference type="SMR" id="Q5LLZ3"/>
<dbReference type="STRING" id="246200.SPO3771"/>
<dbReference type="PaxDb" id="246200-SPO3771"/>
<dbReference type="KEGG" id="sil:SPO3771"/>
<dbReference type="eggNOG" id="COG1968">
    <property type="taxonomic scope" value="Bacteria"/>
</dbReference>
<dbReference type="HOGENOM" id="CLU_060296_1_0_5"/>
<dbReference type="OrthoDB" id="9808289at2"/>
<dbReference type="Proteomes" id="UP000001023">
    <property type="component" value="Chromosome"/>
</dbReference>
<dbReference type="GO" id="GO:0005886">
    <property type="term" value="C:plasma membrane"/>
    <property type="evidence" value="ECO:0007669"/>
    <property type="project" value="UniProtKB-SubCell"/>
</dbReference>
<dbReference type="GO" id="GO:0050380">
    <property type="term" value="F:undecaprenyl-diphosphatase activity"/>
    <property type="evidence" value="ECO:0007669"/>
    <property type="project" value="UniProtKB-UniRule"/>
</dbReference>
<dbReference type="GO" id="GO:0071555">
    <property type="term" value="P:cell wall organization"/>
    <property type="evidence" value="ECO:0007669"/>
    <property type="project" value="UniProtKB-KW"/>
</dbReference>
<dbReference type="GO" id="GO:0009252">
    <property type="term" value="P:peptidoglycan biosynthetic process"/>
    <property type="evidence" value="ECO:0007669"/>
    <property type="project" value="UniProtKB-KW"/>
</dbReference>
<dbReference type="GO" id="GO:0008360">
    <property type="term" value="P:regulation of cell shape"/>
    <property type="evidence" value="ECO:0007669"/>
    <property type="project" value="UniProtKB-KW"/>
</dbReference>
<dbReference type="GO" id="GO:0046677">
    <property type="term" value="P:response to antibiotic"/>
    <property type="evidence" value="ECO:0007669"/>
    <property type="project" value="UniProtKB-UniRule"/>
</dbReference>
<dbReference type="HAMAP" id="MF_01006">
    <property type="entry name" value="Undec_diphosphatase"/>
    <property type="match status" value="1"/>
</dbReference>
<dbReference type="InterPro" id="IPR003824">
    <property type="entry name" value="UppP"/>
</dbReference>
<dbReference type="NCBIfam" id="NF001393">
    <property type="entry name" value="PRK00281.2-4"/>
    <property type="match status" value="1"/>
</dbReference>
<dbReference type="PANTHER" id="PTHR30622">
    <property type="entry name" value="UNDECAPRENYL-DIPHOSPHATASE"/>
    <property type="match status" value="1"/>
</dbReference>
<dbReference type="PANTHER" id="PTHR30622:SF4">
    <property type="entry name" value="UNDECAPRENYL-DIPHOSPHATASE"/>
    <property type="match status" value="1"/>
</dbReference>
<dbReference type="Pfam" id="PF02673">
    <property type="entry name" value="BacA"/>
    <property type="match status" value="1"/>
</dbReference>
<comment type="function">
    <text evidence="1">Catalyzes the dephosphorylation of undecaprenyl diphosphate (UPP). Confers resistance to bacitracin.</text>
</comment>
<comment type="catalytic activity">
    <reaction evidence="1">
        <text>di-trans,octa-cis-undecaprenyl diphosphate + H2O = di-trans,octa-cis-undecaprenyl phosphate + phosphate + H(+)</text>
        <dbReference type="Rhea" id="RHEA:28094"/>
        <dbReference type="ChEBI" id="CHEBI:15377"/>
        <dbReference type="ChEBI" id="CHEBI:15378"/>
        <dbReference type="ChEBI" id="CHEBI:43474"/>
        <dbReference type="ChEBI" id="CHEBI:58405"/>
        <dbReference type="ChEBI" id="CHEBI:60392"/>
        <dbReference type="EC" id="3.6.1.27"/>
    </reaction>
</comment>
<comment type="subcellular location">
    <subcellularLocation>
        <location evidence="1">Cell inner membrane</location>
        <topology evidence="1">Multi-pass membrane protein</topology>
    </subcellularLocation>
</comment>
<comment type="miscellaneous">
    <text>Bacitracin is thought to be involved in the inhibition of peptidoglycan synthesis by sequestering undecaprenyl diphosphate, thereby reducing the pool of lipid carrier available.</text>
</comment>
<comment type="similarity">
    <text evidence="1">Belongs to the UppP family.</text>
</comment>
<name>UPPP_RUEPO</name>
<gene>
    <name evidence="1" type="primary">uppP</name>
    <name type="ordered locus">SPO3771</name>
</gene>
<evidence type="ECO:0000255" key="1">
    <source>
        <dbReference type="HAMAP-Rule" id="MF_01006"/>
    </source>
</evidence>
<protein>
    <recommendedName>
        <fullName evidence="1">Undecaprenyl-diphosphatase</fullName>
        <ecNumber evidence="1">3.6.1.27</ecNumber>
    </recommendedName>
    <alternativeName>
        <fullName evidence="1">Bacitracin resistance protein</fullName>
    </alternativeName>
    <alternativeName>
        <fullName evidence="1">Undecaprenyl pyrophosphate phosphatase</fullName>
    </alternativeName>
</protein>
<feature type="chain" id="PRO_0000151197" description="Undecaprenyl-diphosphatase">
    <location>
        <begin position="1"/>
        <end position="267"/>
    </location>
</feature>
<feature type="transmembrane region" description="Helical" evidence="1">
    <location>
        <begin position="1"/>
        <end position="21"/>
    </location>
</feature>
<feature type="transmembrane region" description="Helical" evidence="1">
    <location>
        <begin position="40"/>
        <end position="60"/>
    </location>
</feature>
<feature type="transmembrane region" description="Helical" evidence="1">
    <location>
        <begin position="85"/>
        <end position="105"/>
    </location>
</feature>
<feature type="transmembrane region" description="Helical" evidence="1">
    <location>
        <begin position="111"/>
        <end position="131"/>
    </location>
</feature>
<feature type="transmembrane region" description="Helical" evidence="1">
    <location>
        <begin position="190"/>
        <end position="210"/>
    </location>
</feature>
<feature type="transmembrane region" description="Helical" evidence="1">
    <location>
        <begin position="219"/>
        <end position="239"/>
    </location>
</feature>
<feature type="transmembrane region" description="Helical" evidence="1">
    <location>
        <begin position="245"/>
        <end position="265"/>
    </location>
</feature>
<proteinExistence type="inferred from homology"/>